<gene>
    <name type="primary">bcsZ</name>
    <name type="ordered locus">STY4183</name>
    <name type="ordered locus">t3900</name>
</gene>
<organism>
    <name type="scientific">Salmonella typhi</name>
    <dbReference type="NCBI Taxonomy" id="90370"/>
    <lineage>
        <taxon>Bacteria</taxon>
        <taxon>Pseudomonadati</taxon>
        <taxon>Pseudomonadota</taxon>
        <taxon>Gammaproteobacteria</taxon>
        <taxon>Enterobacterales</taxon>
        <taxon>Enterobacteriaceae</taxon>
        <taxon>Salmonella</taxon>
    </lineage>
</organism>
<proteinExistence type="inferred from homology"/>
<protein>
    <recommendedName>
        <fullName>Endoglucanase</fullName>
        <ecNumber>3.2.1.4</ecNumber>
    </recommendedName>
    <alternativeName>
        <fullName>Carboxymethylcellulase</fullName>
        <shortName>CMCase</shortName>
    </alternativeName>
    <alternativeName>
        <fullName>Cellulase</fullName>
    </alternativeName>
    <alternativeName>
        <fullName>Endo-1,4-beta-glucanase</fullName>
    </alternativeName>
</protein>
<reference key="1">
    <citation type="journal article" date="2001" name="Nature">
        <title>Complete genome sequence of a multiple drug resistant Salmonella enterica serovar Typhi CT18.</title>
        <authorList>
            <person name="Parkhill J."/>
            <person name="Dougan G."/>
            <person name="James K.D."/>
            <person name="Thomson N.R."/>
            <person name="Pickard D."/>
            <person name="Wain J."/>
            <person name="Churcher C.M."/>
            <person name="Mungall K.L."/>
            <person name="Bentley S.D."/>
            <person name="Holden M.T.G."/>
            <person name="Sebaihia M."/>
            <person name="Baker S."/>
            <person name="Basham D."/>
            <person name="Brooks K."/>
            <person name="Chillingworth T."/>
            <person name="Connerton P."/>
            <person name="Cronin A."/>
            <person name="Davis P."/>
            <person name="Davies R.M."/>
            <person name="Dowd L."/>
            <person name="White N."/>
            <person name="Farrar J."/>
            <person name="Feltwell T."/>
            <person name="Hamlin N."/>
            <person name="Haque A."/>
            <person name="Hien T.T."/>
            <person name="Holroyd S."/>
            <person name="Jagels K."/>
            <person name="Krogh A."/>
            <person name="Larsen T.S."/>
            <person name="Leather S."/>
            <person name="Moule S."/>
            <person name="O'Gaora P."/>
            <person name="Parry C."/>
            <person name="Quail M.A."/>
            <person name="Rutherford K.M."/>
            <person name="Simmonds M."/>
            <person name="Skelton J."/>
            <person name="Stevens K."/>
            <person name="Whitehead S."/>
            <person name="Barrell B.G."/>
        </authorList>
    </citation>
    <scope>NUCLEOTIDE SEQUENCE [LARGE SCALE GENOMIC DNA]</scope>
    <source>
        <strain>CT18</strain>
    </source>
</reference>
<reference key="2">
    <citation type="journal article" date="2003" name="J. Bacteriol.">
        <title>Comparative genomics of Salmonella enterica serovar Typhi strains Ty2 and CT18.</title>
        <authorList>
            <person name="Deng W."/>
            <person name="Liou S.-R."/>
            <person name="Plunkett G. III"/>
            <person name="Mayhew G.F."/>
            <person name="Rose D.J."/>
            <person name="Burland V."/>
            <person name="Kodoyianni V."/>
            <person name="Schwartz D.C."/>
            <person name="Blattner F.R."/>
        </authorList>
    </citation>
    <scope>NUCLEOTIDE SEQUENCE [LARGE SCALE GENOMIC DNA]</scope>
    <source>
        <strain>ATCC 700931 / Ty2</strain>
    </source>
</reference>
<dbReference type="EC" id="3.2.1.4"/>
<dbReference type="EMBL" id="AL513382">
    <property type="protein sequence ID" value="CAD08008.1"/>
    <property type="molecule type" value="Genomic_DNA"/>
</dbReference>
<dbReference type="EMBL" id="AE014613">
    <property type="protein sequence ID" value="AAO71375.1"/>
    <property type="molecule type" value="Genomic_DNA"/>
</dbReference>
<dbReference type="RefSeq" id="NP_458303.1">
    <property type="nucleotide sequence ID" value="NC_003198.1"/>
</dbReference>
<dbReference type="RefSeq" id="WP_000988805.1">
    <property type="nucleotide sequence ID" value="NZ_WSUR01000001.1"/>
</dbReference>
<dbReference type="SMR" id="Q8Z289"/>
<dbReference type="STRING" id="220341.gene:17588021"/>
<dbReference type="KEGG" id="stt:t3900"/>
<dbReference type="KEGG" id="sty:STY4183"/>
<dbReference type="PATRIC" id="fig|220341.7.peg.4272"/>
<dbReference type="eggNOG" id="COG3405">
    <property type="taxonomic scope" value="Bacteria"/>
</dbReference>
<dbReference type="HOGENOM" id="CLU_037297_0_0_6"/>
<dbReference type="OMA" id="IRVYLWV"/>
<dbReference type="OrthoDB" id="9766708at2"/>
<dbReference type="UniPathway" id="UPA00694"/>
<dbReference type="Proteomes" id="UP000000541">
    <property type="component" value="Chromosome"/>
</dbReference>
<dbReference type="Proteomes" id="UP000002670">
    <property type="component" value="Chromosome"/>
</dbReference>
<dbReference type="GO" id="GO:0005576">
    <property type="term" value="C:extracellular region"/>
    <property type="evidence" value="ECO:0007669"/>
    <property type="project" value="UniProtKB-SubCell"/>
</dbReference>
<dbReference type="GO" id="GO:0008810">
    <property type="term" value="F:cellulase activity"/>
    <property type="evidence" value="ECO:0007669"/>
    <property type="project" value="UniProtKB-EC"/>
</dbReference>
<dbReference type="GO" id="GO:0030245">
    <property type="term" value="P:cellulose catabolic process"/>
    <property type="evidence" value="ECO:0007669"/>
    <property type="project" value="UniProtKB-KW"/>
</dbReference>
<dbReference type="Gene3D" id="1.50.10.10">
    <property type="match status" value="1"/>
</dbReference>
<dbReference type="InterPro" id="IPR008928">
    <property type="entry name" value="6-hairpin_glycosidase_sf"/>
</dbReference>
<dbReference type="InterPro" id="IPR012341">
    <property type="entry name" value="6hp_glycosidase-like_sf"/>
</dbReference>
<dbReference type="InterPro" id="IPR002037">
    <property type="entry name" value="Glyco_hydro_8"/>
</dbReference>
<dbReference type="InterPro" id="IPR019834">
    <property type="entry name" value="Glyco_hydro_8_CS"/>
</dbReference>
<dbReference type="NCBIfam" id="NF008305">
    <property type="entry name" value="PRK11097.1"/>
    <property type="match status" value="1"/>
</dbReference>
<dbReference type="Pfam" id="PF01270">
    <property type="entry name" value="Glyco_hydro_8"/>
    <property type="match status" value="1"/>
</dbReference>
<dbReference type="PRINTS" id="PR00735">
    <property type="entry name" value="GLHYDRLASE8"/>
</dbReference>
<dbReference type="SUPFAM" id="SSF48208">
    <property type="entry name" value="Six-hairpin glycosidases"/>
    <property type="match status" value="1"/>
</dbReference>
<dbReference type="PROSITE" id="PS00812">
    <property type="entry name" value="GLYCOSYL_HYDROL_F8"/>
    <property type="match status" value="1"/>
</dbReference>
<comment type="function">
    <text>Hydrolyzes carboxymethylcellulose.</text>
</comment>
<comment type="catalytic activity">
    <reaction>
        <text>Endohydrolysis of (1-&gt;4)-beta-D-glucosidic linkages in cellulose, lichenin and cereal beta-D-glucans.</text>
        <dbReference type="EC" id="3.2.1.4"/>
    </reaction>
</comment>
<comment type="pathway">
    <text>Glycan metabolism; bacterial cellulose biosynthesis.</text>
</comment>
<comment type="subcellular location">
    <subcellularLocation>
        <location>Secreted</location>
    </subcellularLocation>
</comment>
<comment type="similarity">
    <text evidence="4">Belongs to the glycosyl hydrolase 8 (cellulase D) family.</text>
</comment>
<evidence type="ECO:0000250" key="1"/>
<evidence type="ECO:0000255" key="2"/>
<evidence type="ECO:0000255" key="3">
    <source>
        <dbReference type="PROSITE-ProRule" id="PRU10058"/>
    </source>
</evidence>
<evidence type="ECO:0000305" key="4"/>
<feature type="signal peptide" evidence="2">
    <location>
        <begin position="1"/>
        <end position="22"/>
    </location>
</feature>
<feature type="chain" id="PRO_0000007940" description="Endoglucanase">
    <location>
        <begin position="23"/>
        <end position="369"/>
    </location>
</feature>
<feature type="active site" description="Proton donor" evidence="1">
    <location>
        <position position="56"/>
    </location>
</feature>
<feature type="active site" description="Nucleophile" evidence="3">
    <location>
        <position position="117"/>
    </location>
</feature>
<keyword id="KW-0119">Carbohydrate metabolism</keyword>
<keyword id="KW-0136">Cellulose degradation</keyword>
<keyword id="KW-0326">Glycosidase</keyword>
<keyword id="KW-0378">Hydrolase</keyword>
<keyword id="KW-0624">Polysaccharide degradation</keyword>
<keyword id="KW-0964">Secreted</keyword>
<keyword id="KW-0732">Signal</keyword>
<sequence>MMTMLRGWITMIVMLTAINAQAACSWPAWEQFKKDYISQQGRVIDPGDARKITTSEGQSYAMFFALAANDRPAFAQLFNWTQNNLAQGSLREHLPAWLWGQKDPDTWSVLDSNSASDGDIWMAWSLLEAGRLWKETRYTEVGTALLKRIAREEVVNVPGLGSMLLPGKIGFAEANSWRFNPSYLPPQLAQYFSRFGAPWSTLRETNLRLLLETSPKGFSPDWVRYESKQGWQLKAEKTLISSYDAIRVYLWTGMMHDGDPQKARLLARFKPMATLTMKNGVPPEKVDVVSGNAQGTGPVGFSAALLPFLQNRGAQAVQRQRVADHFPGSDAYYNYVLTLFGQGWDQHRFRFTVKGELLPDWGQECVSSR</sequence>
<accession>Q8Z289</accession>
<name>GUN_SALTI</name>